<dbReference type="EMBL" id="AE008692">
    <property type="protein sequence ID" value="AAV89769.1"/>
    <property type="molecule type" value="Genomic_DNA"/>
</dbReference>
<dbReference type="RefSeq" id="WP_011240972.1">
    <property type="nucleotide sequence ID" value="NZ_CP035711.1"/>
</dbReference>
<dbReference type="SMR" id="Q5NNE1"/>
<dbReference type="STRING" id="264203.ZMO1145"/>
<dbReference type="GeneID" id="79903730"/>
<dbReference type="KEGG" id="zmo:ZMO1145"/>
<dbReference type="eggNOG" id="COG0254">
    <property type="taxonomic scope" value="Bacteria"/>
</dbReference>
<dbReference type="HOGENOM" id="CLU_114306_3_2_5"/>
<dbReference type="Proteomes" id="UP000001173">
    <property type="component" value="Chromosome"/>
</dbReference>
<dbReference type="GO" id="GO:1990904">
    <property type="term" value="C:ribonucleoprotein complex"/>
    <property type="evidence" value="ECO:0007669"/>
    <property type="project" value="UniProtKB-KW"/>
</dbReference>
<dbReference type="GO" id="GO:0005840">
    <property type="term" value="C:ribosome"/>
    <property type="evidence" value="ECO:0007669"/>
    <property type="project" value="UniProtKB-KW"/>
</dbReference>
<dbReference type="GO" id="GO:0019843">
    <property type="term" value="F:rRNA binding"/>
    <property type="evidence" value="ECO:0007669"/>
    <property type="project" value="UniProtKB-KW"/>
</dbReference>
<dbReference type="GO" id="GO:0003735">
    <property type="term" value="F:structural constituent of ribosome"/>
    <property type="evidence" value="ECO:0007669"/>
    <property type="project" value="InterPro"/>
</dbReference>
<dbReference type="GO" id="GO:0006412">
    <property type="term" value="P:translation"/>
    <property type="evidence" value="ECO:0007669"/>
    <property type="project" value="UniProtKB-UniRule"/>
</dbReference>
<dbReference type="Gene3D" id="4.10.830.30">
    <property type="entry name" value="Ribosomal protein L31"/>
    <property type="match status" value="1"/>
</dbReference>
<dbReference type="HAMAP" id="MF_00501">
    <property type="entry name" value="Ribosomal_bL31_1"/>
    <property type="match status" value="1"/>
</dbReference>
<dbReference type="InterPro" id="IPR034704">
    <property type="entry name" value="Ribosomal_bL28/bL31-like_sf"/>
</dbReference>
<dbReference type="InterPro" id="IPR002150">
    <property type="entry name" value="Ribosomal_bL31"/>
</dbReference>
<dbReference type="InterPro" id="IPR027491">
    <property type="entry name" value="Ribosomal_bL31_A"/>
</dbReference>
<dbReference type="InterPro" id="IPR042105">
    <property type="entry name" value="Ribosomal_bL31_sf"/>
</dbReference>
<dbReference type="NCBIfam" id="TIGR00105">
    <property type="entry name" value="L31"/>
    <property type="match status" value="1"/>
</dbReference>
<dbReference type="NCBIfam" id="NF001809">
    <property type="entry name" value="PRK00528.1"/>
    <property type="match status" value="1"/>
</dbReference>
<dbReference type="PANTHER" id="PTHR33280">
    <property type="entry name" value="50S RIBOSOMAL PROTEIN L31, CHLOROPLASTIC"/>
    <property type="match status" value="1"/>
</dbReference>
<dbReference type="PANTHER" id="PTHR33280:SF6">
    <property type="entry name" value="LARGE RIBOSOMAL SUBUNIT PROTEIN BL31A"/>
    <property type="match status" value="1"/>
</dbReference>
<dbReference type="Pfam" id="PF01197">
    <property type="entry name" value="Ribosomal_L31"/>
    <property type="match status" value="1"/>
</dbReference>
<dbReference type="PRINTS" id="PR01249">
    <property type="entry name" value="RIBOSOMALL31"/>
</dbReference>
<dbReference type="SUPFAM" id="SSF143800">
    <property type="entry name" value="L28p-like"/>
    <property type="match status" value="1"/>
</dbReference>
<dbReference type="PROSITE" id="PS01143">
    <property type="entry name" value="RIBOSOMAL_L31"/>
    <property type="match status" value="1"/>
</dbReference>
<feature type="chain" id="PRO_0000173185" description="Large ribosomal subunit protein bL31">
    <location>
        <begin position="1"/>
        <end position="75"/>
    </location>
</feature>
<keyword id="KW-1185">Reference proteome</keyword>
<keyword id="KW-0687">Ribonucleoprotein</keyword>
<keyword id="KW-0689">Ribosomal protein</keyword>
<keyword id="KW-0694">RNA-binding</keyword>
<keyword id="KW-0699">rRNA-binding</keyword>
<proteinExistence type="inferred from homology"/>
<sequence>MKQNIHPDYHFIKVQLTDGTVFETRSTWGKEGDTMKLDIDPRVHPAWTGGRSQLVDAGGQVARFNKRFGALLKKK</sequence>
<gene>
    <name evidence="1" type="primary">rpmE</name>
    <name type="ordered locus">ZMO1145</name>
</gene>
<evidence type="ECO:0000255" key="1">
    <source>
        <dbReference type="HAMAP-Rule" id="MF_00501"/>
    </source>
</evidence>
<evidence type="ECO:0000305" key="2"/>
<protein>
    <recommendedName>
        <fullName evidence="1">Large ribosomal subunit protein bL31</fullName>
    </recommendedName>
    <alternativeName>
        <fullName evidence="2">50S ribosomal protein L31</fullName>
    </alternativeName>
</protein>
<organism>
    <name type="scientific">Zymomonas mobilis subsp. mobilis (strain ATCC 31821 / ZM4 / CP4)</name>
    <dbReference type="NCBI Taxonomy" id="264203"/>
    <lineage>
        <taxon>Bacteria</taxon>
        <taxon>Pseudomonadati</taxon>
        <taxon>Pseudomonadota</taxon>
        <taxon>Alphaproteobacteria</taxon>
        <taxon>Sphingomonadales</taxon>
        <taxon>Zymomonadaceae</taxon>
        <taxon>Zymomonas</taxon>
    </lineage>
</organism>
<accession>Q5NNE1</accession>
<comment type="function">
    <text evidence="1">Binds the 23S rRNA.</text>
</comment>
<comment type="subunit">
    <text evidence="1">Part of the 50S ribosomal subunit.</text>
</comment>
<comment type="similarity">
    <text evidence="1">Belongs to the bacterial ribosomal protein bL31 family. Type A subfamily.</text>
</comment>
<name>RL31_ZYMMO</name>
<reference key="1">
    <citation type="journal article" date="2005" name="Nat. Biotechnol.">
        <title>The genome sequence of the ethanologenic bacterium Zymomonas mobilis ZM4.</title>
        <authorList>
            <person name="Seo J.-S."/>
            <person name="Chong H."/>
            <person name="Park H.S."/>
            <person name="Yoon K.-O."/>
            <person name="Jung C."/>
            <person name="Kim J.J."/>
            <person name="Hong J.H."/>
            <person name="Kim H."/>
            <person name="Kim J.-H."/>
            <person name="Kil J.-I."/>
            <person name="Park C.J."/>
            <person name="Oh H.-M."/>
            <person name="Lee J.-S."/>
            <person name="Jin S.-J."/>
            <person name="Um H.-W."/>
            <person name="Lee H.-J."/>
            <person name="Oh S.-J."/>
            <person name="Kim J.Y."/>
            <person name="Kang H.L."/>
            <person name="Lee S.Y."/>
            <person name="Lee K.J."/>
            <person name="Kang H.S."/>
        </authorList>
    </citation>
    <scope>NUCLEOTIDE SEQUENCE [LARGE SCALE GENOMIC DNA]</scope>
    <source>
        <strain>ATCC 31821 / ZM4 / CP4</strain>
    </source>
</reference>